<comment type="function">
    <text evidence="1">Key component of the proton channel; it plays a direct role in the translocation of protons across the membrane.</text>
</comment>
<comment type="subunit">
    <text evidence="1">F-type ATPases have 2 components, CF(1) - the catalytic core - and CF(0) - the membrane proton channel. CF(1) has five subunits: alpha(3), beta(3), gamma(1), delta(1), epsilon(1). CF(0) has three main subunits: a(1), b(2) and c(9-12). The alpha and beta chains form an alternating ring which encloses part of the gamma chain. CF(1) is attached to CF(0) by a central stalk formed by the gamma and epsilon chains, while a peripheral stalk is formed by the delta and b chains.</text>
</comment>
<comment type="subcellular location">
    <subcellularLocation>
        <location evidence="1">Cell inner membrane</location>
        <topology evidence="1">Multi-pass membrane protein</topology>
    </subcellularLocation>
</comment>
<comment type="similarity">
    <text evidence="1">Belongs to the ATPase A chain family.</text>
</comment>
<reference key="1">
    <citation type="journal article" date="2009" name="PLoS Genet.">
        <title>Organised genome dynamics in the Escherichia coli species results in highly diverse adaptive paths.</title>
        <authorList>
            <person name="Touchon M."/>
            <person name="Hoede C."/>
            <person name="Tenaillon O."/>
            <person name="Barbe V."/>
            <person name="Baeriswyl S."/>
            <person name="Bidet P."/>
            <person name="Bingen E."/>
            <person name="Bonacorsi S."/>
            <person name="Bouchier C."/>
            <person name="Bouvet O."/>
            <person name="Calteau A."/>
            <person name="Chiapello H."/>
            <person name="Clermont O."/>
            <person name="Cruveiller S."/>
            <person name="Danchin A."/>
            <person name="Diard M."/>
            <person name="Dossat C."/>
            <person name="Karoui M.E."/>
            <person name="Frapy E."/>
            <person name="Garry L."/>
            <person name="Ghigo J.M."/>
            <person name="Gilles A.M."/>
            <person name="Johnson J."/>
            <person name="Le Bouguenec C."/>
            <person name="Lescat M."/>
            <person name="Mangenot S."/>
            <person name="Martinez-Jehanne V."/>
            <person name="Matic I."/>
            <person name="Nassif X."/>
            <person name="Oztas S."/>
            <person name="Petit M.A."/>
            <person name="Pichon C."/>
            <person name="Rouy Z."/>
            <person name="Ruf C.S."/>
            <person name="Schneider D."/>
            <person name="Tourret J."/>
            <person name="Vacherie B."/>
            <person name="Vallenet D."/>
            <person name="Medigue C."/>
            <person name="Rocha E.P.C."/>
            <person name="Denamur E."/>
        </authorList>
    </citation>
    <scope>NUCLEOTIDE SEQUENCE [LARGE SCALE GENOMIC DNA]</scope>
    <source>
        <strain>S88 / ExPEC</strain>
    </source>
</reference>
<dbReference type="EMBL" id="CU928161">
    <property type="protein sequence ID" value="CAR05366.1"/>
    <property type="molecule type" value="Genomic_DNA"/>
</dbReference>
<dbReference type="RefSeq" id="WP_000135618.1">
    <property type="nucleotide sequence ID" value="NC_011742.1"/>
</dbReference>
<dbReference type="SMR" id="B7MGF8"/>
<dbReference type="GeneID" id="86948620"/>
<dbReference type="KEGG" id="ecz:ECS88_4160"/>
<dbReference type="HOGENOM" id="CLU_041018_1_0_6"/>
<dbReference type="Proteomes" id="UP000000747">
    <property type="component" value="Chromosome"/>
</dbReference>
<dbReference type="GO" id="GO:0005886">
    <property type="term" value="C:plasma membrane"/>
    <property type="evidence" value="ECO:0007669"/>
    <property type="project" value="UniProtKB-SubCell"/>
</dbReference>
<dbReference type="GO" id="GO:0045259">
    <property type="term" value="C:proton-transporting ATP synthase complex"/>
    <property type="evidence" value="ECO:0007669"/>
    <property type="project" value="UniProtKB-KW"/>
</dbReference>
<dbReference type="GO" id="GO:0046933">
    <property type="term" value="F:proton-transporting ATP synthase activity, rotational mechanism"/>
    <property type="evidence" value="ECO:0007669"/>
    <property type="project" value="UniProtKB-UniRule"/>
</dbReference>
<dbReference type="GO" id="GO:0042777">
    <property type="term" value="P:proton motive force-driven plasma membrane ATP synthesis"/>
    <property type="evidence" value="ECO:0007669"/>
    <property type="project" value="TreeGrafter"/>
</dbReference>
<dbReference type="CDD" id="cd00310">
    <property type="entry name" value="ATP-synt_Fo_a_6"/>
    <property type="match status" value="1"/>
</dbReference>
<dbReference type="FunFam" id="1.20.120.220:FF:000002">
    <property type="entry name" value="ATP synthase subunit a"/>
    <property type="match status" value="1"/>
</dbReference>
<dbReference type="Gene3D" id="1.20.120.220">
    <property type="entry name" value="ATP synthase, F0 complex, subunit A"/>
    <property type="match status" value="1"/>
</dbReference>
<dbReference type="HAMAP" id="MF_01393">
    <property type="entry name" value="ATP_synth_a_bact"/>
    <property type="match status" value="1"/>
</dbReference>
<dbReference type="InterPro" id="IPR045082">
    <property type="entry name" value="ATP_syn_F0_a_bact/chloroplast"/>
</dbReference>
<dbReference type="InterPro" id="IPR000568">
    <property type="entry name" value="ATP_synth_F0_asu"/>
</dbReference>
<dbReference type="InterPro" id="IPR023011">
    <property type="entry name" value="ATP_synth_F0_asu_AS"/>
</dbReference>
<dbReference type="InterPro" id="IPR035908">
    <property type="entry name" value="F0_ATP_A_sf"/>
</dbReference>
<dbReference type="NCBIfam" id="TIGR01131">
    <property type="entry name" value="ATP_synt_6_or_A"/>
    <property type="match status" value="1"/>
</dbReference>
<dbReference type="NCBIfam" id="NF004477">
    <property type="entry name" value="PRK05815.1-1"/>
    <property type="match status" value="1"/>
</dbReference>
<dbReference type="PANTHER" id="PTHR42823">
    <property type="entry name" value="ATP SYNTHASE SUBUNIT A, CHLOROPLASTIC"/>
    <property type="match status" value="1"/>
</dbReference>
<dbReference type="PANTHER" id="PTHR42823:SF3">
    <property type="entry name" value="ATP SYNTHASE SUBUNIT A, CHLOROPLASTIC"/>
    <property type="match status" value="1"/>
</dbReference>
<dbReference type="Pfam" id="PF00119">
    <property type="entry name" value="ATP-synt_A"/>
    <property type="match status" value="1"/>
</dbReference>
<dbReference type="PRINTS" id="PR00123">
    <property type="entry name" value="ATPASEA"/>
</dbReference>
<dbReference type="SUPFAM" id="SSF81336">
    <property type="entry name" value="F1F0 ATP synthase subunit A"/>
    <property type="match status" value="1"/>
</dbReference>
<dbReference type="PROSITE" id="PS00449">
    <property type="entry name" value="ATPASE_A"/>
    <property type="match status" value="1"/>
</dbReference>
<name>ATP6_ECO45</name>
<keyword id="KW-0066">ATP synthesis</keyword>
<keyword id="KW-0997">Cell inner membrane</keyword>
<keyword id="KW-1003">Cell membrane</keyword>
<keyword id="KW-0138">CF(0)</keyword>
<keyword id="KW-0375">Hydrogen ion transport</keyword>
<keyword id="KW-0406">Ion transport</keyword>
<keyword id="KW-0472">Membrane</keyword>
<keyword id="KW-1185">Reference proteome</keyword>
<keyword id="KW-0812">Transmembrane</keyword>
<keyword id="KW-1133">Transmembrane helix</keyword>
<keyword id="KW-0813">Transport</keyword>
<gene>
    <name evidence="1" type="primary">atpB</name>
    <name type="ordered locus">ECS88_4160</name>
</gene>
<evidence type="ECO:0000255" key="1">
    <source>
        <dbReference type="HAMAP-Rule" id="MF_01393"/>
    </source>
</evidence>
<organism>
    <name type="scientific">Escherichia coli O45:K1 (strain S88 / ExPEC)</name>
    <dbReference type="NCBI Taxonomy" id="585035"/>
    <lineage>
        <taxon>Bacteria</taxon>
        <taxon>Pseudomonadati</taxon>
        <taxon>Pseudomonadota</taxon>
        <taxon>Gammaproteobacteria</taxon>
        <taxon>Enterobacterales</taxon>
        <taxon>Enterobacteriaceae</taxon>
        <taxon>Escherichia</taxon>
    </lineage>
</organism>
<sequence>MASENMTPQDYIGHHLNNLQLDLRTFSLVDPHNPPATFWTINIDSMFFSVVLGLLFLVLFRSVAKKATSGVPGKFQTAIELVIGFVNGSVKDMYHGKSKLIAPLALTIFVWVFLMNLMDLLPIDLLPYIAEHVLGLPALRVVPSADVNVTLSMALGVFILILFYSIKMKGIGGFTKELTLQPFNHWAFIPVNLILEGVSLLSKPVSLGLRLFGNMYAGELIFILIAGLLPWWSQWILNVPWAIFHILIITLQAFIFMVLTIVYLSMASEEH</sequence>
<proteinExistence type="inferred from homology"/>
<protein>
    <recommendedName>
        <fullName evidence="1">ATP synthase subunit a</fullName>
    </recommendedName>
    <alternativeName>
        <fullName evidence="1">ATP synthase F0 sector subunit a</fullName>
    </alternativeName>
    <alternativeName>
        <fullName evidence="1">F-ATPase subunit 6</fullName>
    </alternativeName>
</protein>
<feature type="chain" id="PRO_1000145269" description="ATP synthase subunit a">
    <location>
        <begin position="1"/>
        <end position="271"/>
    </location>
</feature>
<feature type="transmembrane region" description="Helical" evidence="1">
    <location>
        <begin position="40"/>
        <end position="60"/>
    </location>
</feature>
<feature type="transmembrane region" description="Helical" evidence="1">
    <location>
        <begin position="100"/>
        <end position="120"/>
    </location>
</feature>
<feature type="transmembrane region" description="Helical" evidence="1">
    <location>
        <begin position="146"/>
        <end position="166"/>
    </location>
</feature>
<feature type="transmembrane region" description="Helical" evidence="1">
    <location>
        <begin position="220"/>
        <end position="240"/>
    </location>
</feature>
<feature type="transmembrane region" description="Helical" evidence="1">
    <location>
        <begin position="242"/>
        <end position="262"/>
    </location>
</feature>
<accession>B7MGF8</accession>